<accession>Q9STX3</accession>
<accession>Q8LAQ7</accession>
<name>GID2_ARATH</name>
<feature type="chain" id="PRO_0000119962" description="F-box protein GID2">
    <location>
        <begin position="1"/>
        <end position="151"/>
    </location>
</feature>
<feature type="domain" description="F-box">
    <location>
        <begin position="29"/>
        <end position="75"/>
    </location>
</feature>
<feature type="region of interest" description="Disordered" evidence="1">
    <location>
        <begin position="1"/>
        <end position="27"/>
    </location>
</feature>
<feature type="compositionally biased region" description="Basic and acidic residues" evidence="1">
    <location>
        <begin position="1"/>
        <end position="25"/>
    </location>
</feature>
<feature type="mutagenesis site" description="In gar2-1/sly1-d; gain of function allele that promotes plant growth by increasing the affinity with DELLA protein substrates." evidence="3 4">
    <original>E</original>
    <variation>K</variation>
    <location>
        <position position="138"/>
    </location>
</feature>
<feature type="sequence conflict" description="In Ref. 4; AAM65209." evidence="7" ref="4">
    <original>R</original>
    <variation>L</variation>
    <location>
        <position position="3"/>
    </location>
</feature>
<dbReference type="EMBL" id="AL078637">
    <property type="protein sequence ID" value="CAB45056.1"/>
    <property type="molecule type" value="Genomic_DNA"/>
</dbReference>
<dbReference type="EMBL" id="AL161561">
    <property type="protein sequence ID" value="CAB79331.1"/>
    <property type="molecule type" value="Genomic_DNA"/>
</dbReference>
<dbReference type="EMBL" id="CP002687">
    <property type="protein sequence ID" value="AEE84867.1"/>
    <property type="molecule type" value="Genomic_DNA"/>
</dbReference>
<dbReference type="EMBL" id="BT004192">
    <property type="protein sequence ID" value="AAO42210.1"/>
    <property type="molecule type" value="mRNA"/>
</dbReference>
<dbReference type="EMBL" id="BT005395">
    <property type="protein sequence ID" value="AAO63815.1"/>
    <property type="molecule type" value="mRNA"/>
</dbReference>
<dbReference type="EMBL" id="AY087672">
    <property type="protein sequence ID" value="AAM65209.1"/>
    <property type="molecule type" value="mRNA"/>
</dbReference>
<dbReference type="PIR" id="T09884">
    <property type="entry name" value="T09884"/>
</dbReference>
<dbReference type="RefSeq" id="NP_194152.1">
    <property type="nucleotide sequence ID" value="NM_118554.3"/>
</dbReference>
<dbReference type="BioGRID" id="13811">
    <property type="interactions" value="13"/>
</dbReference>
<dbReference type="FunCoup" id="Q9STX3">
    <property type="interactions" value="1935"/>
</dbReference>
<dbReference type="IntAct" id="Q9STX3">
    <property type="interactions" value="14"/>
</dbReference>
<dbReference type="STRING" id="3702.Q9STX3"/>
<dbReference type="PaxDb" id="3702-AT4G24210.1"/>
<dbReference type="ProteomicsDB" id="222349"/>
<dbReference type="DNASU" id="828522"/>
<dbReference type="EnsemblPlants" id="AT4G24210.1">
    <property type="protein sequence ID" value="AT4G24210.1"/>
    <property type="gene ID" value="AT4G24210"/>
</dbReference>
<dbReference type="GeneID" id="828522"/>
<dbReference type="Gramene" id="AT4G24210.1">
    <property type="protein sequence ID" value="AT4G24210.1"/>
    <property type="gene ID" value="AT4G24210"/>
</dbReference>
<dbReference type="KEGG" id="ath:AT4G24210"/>
<dbReference type="Araport" id="AT4G24210"/>
<dbReference type="TAIR" id="AT4G24210">
    <property type="gene designation" value="SLY1"/>
</dbReference>
<dbReference type="eggNOG" id="ENOG502RYCP">
    <property type="taxonomic scope" value="Eukaryota"/>
</dbReference>
<dbReference type="HOGENOM" id="CLU_111348_0_0_1"/>
<dbReference type="InParanoid" id="Q9STX3"/>
<dbReference type="OMA" id="NIGCGQN"/>
<dbReference type="OrthoDB" id="1896968at2759"/>
<dbReference type="PhylomeDB" id="Q9STX3"/>
<dbReference type="UniPathway" id="UPA00143"/>
<dbReference type="PRO" id="PR:Q9STX3"/>
<dbReference type="Proteomes" id="UP000006548">
    <property type="component" value="Chromosome 4"/>
</dbReference>
<dbReference type="ExpressionAtlas" id="Q9STX3">
    <property type="expression patterns" value="baseline and differential"/>
</dbReference>
<dbReference type="GO" id="GO:0005634">
    <property type="term" value="C:nucleus"/>
    <property type="evidence" value="ECO:0000314"/>
    <property type="project" value="TAIR"/>
</dbReference>
<dbReference type="GO" id="GO:0019005">
    <property type="term" value="C:SCF ubiquitin ligase complex"/>
    <property type="evidence" value="ECO:0000353"/>
    <property type="project" value="TAIR"/>
</dbReference>
<dbReference type="GO" id="GO:0009740">
    <property type="term" value="P:gibberellic acid mediated signaling pathway"/>
    <property type="evidence" value="ECO:0007669"/>
    <property type="project" value="UniProtKB-KW"/>
</dbReference>
<dbReference type="GO" id="GO:0016567">
    <property type="term" value="P:protein ubiquitination"/>
    <property type="evidence" value="ECO:0007669"/>
    <property type="project" value="UniProtKB-UniPathway"/>
</dbReference>
<dbReference type="GO" id="GO:0009937">
    <property type="term" value="P:regulation of gibberellic acid mediated signaling pathway"/>
    <property type="evidence" value="ECO:0007669"/>
    <property type="project" value="InterPro"/>
</dbReference>
<dbReference type="GO" id="GO:0010162">
    <property type="term" value="P:seed dormancy process"/>
    <property type="evidence" value="ECO:0000315"/>
    <property type="project" value="TAIR"/>
</dbReference>
<dbReference type="GO" id="GO:0009845">
    <property type="term" value="P:seed germination"/>
    <property type="evidence" value="ECO:0000315"/>
    <property type="project" value="TAIR"/>
</dbReference>
<dbReference type="CDD" id="cd22151">
    <property type="entry name" value="F-box_AtGID2-like"/>
    <property type="match status" value="1"/>
</dbReference>
<dbReference type="FunFam" id="1.20.1280.50:FF:000067">
    <property type="entry name" value="F-box protein GID2"/>
    <property type="match status" value="1"/>
</dbReference>
<dbReference type="Gene3D" id="1.20.1280.50">
    <property type="match status" value="1"/>
</dbReference>
<dbReference type="InterPro" id="IPR036047">
    <property type="entry name" value="F-box-like_dom_sf"/>
</dbReference>
<dbReference type="InterPro" id="IPR001810">
    <property type="entry name" value="F-box_dom"/>
</dbReference>
<dbReference type="InterPro" id="IPR044184">
    <property type="entry name" value="SNE/GID2"/>
</dbReference>
<dbReference type="PANTHER" id="PTHR47750:SF7">
    <property type="entry name" value="F-BOX PROTEIN"/>
    <property type="match status" value="1"/>
</dbReference>
<dbReference type="PANTHER" id="PTHR47750">
    <property type="entry name" value="F-BOX PROTEIN SNE"/>
    <property type="match status" value="1"/>
</dbReference>
<dbReference type="Pfam" id="PF00646">
    <property type="entry name" value="F-box"/>
    <property type="match status" value="1"/>
</dbReference>
<dbReference type="SUPFAM" id="SSF81383">
    <property type="entry name" value="F-box domain"/>
    <property type="match status" value="1"/>
</dbReference>
<keyword id="KW-0939">Gibberellin signaling pathway</keyword>
<keyword id="KW-0539">Nucleus</keyword>
<keyword id="KW-1185">Reference proteome</keyword>
<keyword id="KW-0833">Ubl conjugation pathway</keyword>
<sequence>MKRSTTDSDLAGDAHNETNKKMKSTEEEEIGFSNLDENLVYEVLKHVDAKTLAMSSCVSKIWHKTAQDERLWELICTRHWTNIGCGQNQLRSVVLALGGFRRLHSLYLWPLSKPNPRARFGKDELKLTLSLLSIRYYEKMSFTKRPLPESK</sequence>
<proteinExistence type="evidence at protein level"/>
<reference key="1">
    <citation type="journal article" date="1999" name="Nature">
        <title>Sequence and analysis of chromosome 4 of the plant Arabidopsis thaliana.</title>
        <authorList>
            <person name="Mayer K.F.X."/>
            <person name="Schueller C."/>
            <person name="Wambutt R."/>
            <person name="Murphy G."/>
            <person name="Volckaert G."/>
            <person name="Pohl T."/>
            <person name="Duesterhoeft A."/>
            <person name="Stiekema W."/>
            <person name="Entian K.-D."/>
            <person name="Terryn N."/>
            <person name="Harris B."/>
            <person name="Ansorge W."/>
            <person name="Brandt P."/>
            <person name="Grivell L.A."/>
            <person name="Rieger M."/>
            <person name="Weichselgartner M."/>
            <person name="de Simone V."/>
            <person name="Obermaier B."/>
            <person name="Mache R."/>
            <person name="Mueller M."/>
            <person name="Kreis M."/>
            <person name="Delseny M."/>
            <person name="Puigdomenech P."/>
            <person name="Watson M."/>
            <person name="Schmidtheini T."/>
            <person name="Reichert B."/>
            <person name="Portetelle D."/>
            <person name="Perez-Alonso M."/>
            <person name="Boutry M."/>
            <person name="Bancroft I."/>
            <person name="Vos P."/>
            <person name="Hoheisel J."/>
            <person name="Zimmermann W."/>
            <person name="Wedler H."/>
            <person name="Ridley P."/>
            <person name="Langham S.-A."/>
            <person name="McCullagh B."/>
            <person name="Bilham L."/>
            <person name="Robben J."/>
            <person name="van der Schueren J."/>
            <person name="Grymonprez B."/>
            <person name="Chuang Y.-J."/>
            <person name="Vandenbussche F."/>
            <person name="Braeken M."/>
            <person name="Weltjens I."/>
            <person name="Voet M."/>
            <person name="Bastiaens I."/>
            <person name="Aert R."/>
            <person name="Defoor E."/>
            <person name="Weitzenegger T."/>
            <person name="Bothe G."/>
            <person name="Ramsperger U."/>
            <person name="Hilbert H."/>
            <person name="Braun M."/>
            <person name="Holzer E."/>
            <person name="Brandt A."/>
            <person name="Peters S."/>
            <person name="van Staveren M."/>
            <person name="Dirkse W."/>
            <person name="Mooijman P."/>
            <person name="Klein Lankhorst R."/>
            <person name="Rose M."/>
            <person name="Hauf J."/>
            <person name="Koetter P."/>
            <person name="Berneiser S."/>
            <person name="Hempel S."/>
            <person name="Feldpausch M."/>
            <person name="Lamberth S."/>
            <person name="Van den Daele H."/>
            <person name="De Keyser A."/>
            <person name="Buysshaert C."/>
            <person name="Gielen J."/>
            <person name="Villarroel R."/>
            <person name="De Clercq R."/>
            <person name="van Montagu M."/>
            <person name="Rogers J."/>
            <person name="Cronin A."/>
            <person name="Quail M.A."/>
            <person name="Bray-Allen S."/>
            <person name="Clark L."/>
            <person name="Doggett J."/>
            <person name="Hall S."/>
            <person name="Kay M."/>
            <person name="Lennard N."/>
            <person name="McLay K."/>
            <person name="Mayes R."/>
            <person name="Pettett A."/>
            <person name="Rajandream M.A."/>
            <person name="Lyne M."/>
            <person name="Benes V."/>
            <person name="Rechmann S."/>
            <person name="Borkova D."/>
            <person name="Bloecker H."/>
            <person name="Scharfe M."/>
            <person name="Grimm M."/>
            <person name="Loehnert T.-H."/>
            <person name="Dose S."/>
            <person name="de Haan M."/>
            <person name="Maarse A.C."/>
            <person name="Schaefer M."/>
            <person name="Mueller-Auer S."/>
            <person name="Gabel C."/>
            <person name="Fuchs M."/>
            <person name="Fartmann B."/>
            <person name="Granderath K."/>
            <person name="Dauner D."/>
            <person name="Herzl A."/>
            <person name="Neumann S."/>
            <person name="Argiriou A."/>
            <person name="Vitale D."/>
            <person name="Liguori R."/>
            <person name="Piravandi E."/>
            <person name="Massenet O."/>
            <person name="Quigley F."/>
            <person name="Clabauld G."/>
            <person name="Muendlein A."/>
            <person name="Felber R."/>
            <person name="Schnabl S."/>
            <person name="Hiller R."/>
            <person name="Schmidt W."/>
            <person name="Lecharny A."/>
            <person name="Aubourg S."/>
            <person name="Chefdor F."/>
            <person name="Cooke R."/>
            <person name="Berger C."/>
            <person name="Monfort A."/>
            <person name="Casacuberta E."/>
            <person name="Gibbons T."/>
            <person name="Weber N."/>
            <person name="Vandenbol M."/>
            <person name="Bargues M."/>
            <person name="Terol J."/>
            <person name="Torres A."/>
            <person name="Perez-Perez A."/>
            <person name="Purnelle B."/>
            <person name="Bent E."/>
            <person name="Johnson S."/>
            <person name="Tacon D."/>
            <person name="Jesse T."/>
            <person name="Heijnen L."/>
            <person name="Schwarz S."/>
            <person name="Scholler P."/>
            <person name="Heber S."/>
            <person name="Francs P."/>
            <person name="Bielke C."/>
            <person name="Frishman D."/>
            <person name="Haase D."/>
            <person name="Lemcke K."/>
            <person name="Mewes H.-W."/>
            <person name="Stocker S."/>
            <person name="Zaccaria P."/>
            <person name="Bevan M."/>
            <person name="Wilson R.K."/>
            <person name="de la Bastide M."/>
            <person name="Habermann K."/>
            <person name="Parnell L."/>
            <person name="Dedhia N."/>
            <person name="Gnoj L."/>
            <person name="Schutz K."/>
            <person name="Huang E."/>
            <person name="Spiegel L."/>
            <person name="Sekhon M."/>
            <person name="Murray J."/>
            <person name="Sheet P."/>
            <person name="Cordes M."/>
            <person name="Abu-Threideh J."/>
            <person name="Stoneking T."/>
            <person name="Kalicki J."/>
            <person name="Graves T."/>
            <person name="Harmon G."/>
            <person name="Edwards J."/>
            <person name="Latreille P."/>
            <person name="Courtney L."/>
            <person name="Cloud J."/>
            <person name="Abbott A."/>
            <person name="Scott K."/>
            <person name="Johnson D."/>
            <person name="Minx P."/>
            <person name="Bentley D."/>
            <person name="Fulton B."/>
            <person name="Miller N."/>
            <person name="Greco T."/>
            <person name="Kemp K."/>
            <person name="Kramer J."/>
            <person name="Fulton L."/>
            <person name="Mardis E."/>
            <person name="Dante M."/>
            <person name="Pepin K."/>
            <person name="Hillier L.W."/>
            <person name="Nelson J."/>
            <person name="Spieth J."/>
            <person name="Ryan E."/>
            <person name="Andrews S."/>
            <person name="Geisel C."/>
            <person name="Layman D."/>
            <person name="Du H."/>
            <person name="Ali J."/>
            <person name="Berghoff A."/>
            <person name="Jones K."/>
            <person name="Drone K."/>
            <person name="Cotton M."/>
            <person name="Joshu C."/>
            <person name="Antonoiu B."/>
            <person name="Zidanic M."/>
            <person name="Strong C."/>
            <person name="Sun H."/>
            <person name="Lamar B."/>
            <person name="Yordan C."/>
            <person name="Ma P."/>
            <person name="Zhong J."/>
            <person name="Preston R."/>
            <person name="Vil D."/>
            <person name="Shekher M."/>
            <person name="Matero A."/>
            <person name="Shah R."/>
            <person name="Swaby I.K."/>
            <person name="O'Shaughnessy A."/>
            <person name="Rodriguez M."/>
            <person name="Hoffman J."/>
            <person name="Till S."/>
            <person name="Granat S."/>
            <person name="Shohdy N."/>
            <person name="Hasegawa A."/>
            <person name="Hameed A."/>
            <person name="Lodhi M."/>
            <person name="Johnson A."/>
            <person name="Chen E."/>
            <person name="Marra M.A."/>
            <person name="Martienssen R."/>
            <person name="McCombie W.R."/>
        </authorList>
    </citation>
    <scope>NUCLEOTIDE SEQUENCE [LARGE SCALE GENOMIC DNA]</scope>
    <source>
        <strain>cv. Columbia</strain>
    </source>
</reference>
<reference key="2">
    <citation type="journal article" date="2017" name="Plant J.">
        <title>Araport11: a complete reannotation of the Arabidopsis thaliana reference genome.</title>
        <authorList>
            <person name="Cheng C.Y."/>
            <person name="Krishnakumar V."/>
            <person name="Chan A.P."/>
            <person name="Thibaud-Nissen F."/>
            <person name="Schobel S."/>
            <person name="Town C.D."/>
        </authorList>
    </citation>
    <scope>GENOME REANNOTATION</scope>
    <source>
        <strain>cv. Columbia</strain>
    </source>
</reference>
<reference key="3">
    <citation type="journal article" date="2003" name="Science">
        <title>Empirical analysis of transcriptional activity in the Arabidopsis genome.</title>
        <authorList>
            <person name="Yamada K."/>
            <person name="Lim J."/>
            <person name="Dale J.M."/>
            <person name="Chen H."/>
            <person name="Shinn P."/>
            <person name="Palm C.J."/>
            <person name="Southwick A.M."/>
            <person name="Wu H.C."/>
            <person name="Kim C.J."/>
            <person name="Nguyen M."/>
            <person name="Pham P.K."/>
            <person name="Cheuk R.F."/>
            <person name="Karlin-Newmann G."/>
            <person name="Liu S.X."/>
            <person name="Lam B."/>
            <person name="Sakano H."/>
            <person name="Wu T."/>
            <person name="Yu G."/>
            <person name="Miranda M."/>
            <person name="Quach H.L."/>
            <person name="Tripp M."/>
            <person name="Chang C.H."/>
            <person name="Lee J.M."/>
            <person name="Toriumi M.J."/>
            <person name="Chan M.M."/>
            <person name="Tang C.C."/>
            <person name="Onodera C.S."/>
            <person name="Deng J.M."/>
            <person name="Akiyama K."/>
            <person name="Ansari Y."/>
            <person name="Arakawa T."/>
            <person name="Banh J."/>
            <person name="Banno F."/>
            <person name="Bowser L."/>
            <person name="Brooks S.Y."/>
            <person name="Carninci P."/>
            <person name="Chao Q."/>
            <person name="Choy N."/>
            <person name="Enju A."/>
            <person name="Goldsmith A.D."/>
            <person name="Gurjal M."/>
            <person name="Hansen N.F."/>
            <person name="Hayashizaki Y."/>
            <person name="Johnson-Hopson C."/>
            <person name="Hsuan V.W."/>
            <person name="Iida K."/>
            <person name="Karnes M."/>
            <person name="Khan S."/>
            <person name="Koesema E."/>
            <person name="Ishida J."/>
            <person name="Jiang P.X."/>
            <person name="Jones T."/>
            <person name="Kawai J."/>
            <person name="Kamiya A."/>
            <person name="Meyers C."/>
            <person name="Nakajima M."/>
            <person name="Narusaka M."/>
            <person name="Seki M."/>
            <person name="Sakurai T."/>
            <person name="Satou M."/>
            <person name="Tamse R."/>
            <person name="Vaysberg M."/>
            <person name="Wallender E.K."/>
            <person name="Wong C."/>
            <person name="Yamamura Y."/>
            <person name="Yuan S."/>
            <person name="Shinozaki K."/>
            <person name="Davis R.W."/>
            <person name="Theologis A."/>
            <person name="Ecker J.R."/>
        </authorList>
    </citation>
    <scope>NUCLEOTIDE SEQUENCE [LARGE SCALE MRNA]</scope>
    <source>
        <strain>cv. Columbia</strain>
    </source>
</reference>
<reference key="4">
    <citation type="submission" date="2002-03" db="EMBL/GenBank/DDBJ databases">
        <title>Full-length cDNA from Arabidopsis thaliana.</title>
        <authorList>
            <person name="Brover V.V."/>
            <person name="Troukhan M.E."/>
            <person name="Alexandrov N.A."/>
            <person name="Lu Y.-P."/>
            <person name="Flavell R.B."/>
            <person name="Feldmann K.A."/>
        </authorList>
    </citation>
    <scope>NUCLEOTIDE SEQUENCE [LARGE SCALE MRNA]</scope>
</reference>
<reference key="5">
    <citation type="journal article" date="2003" name="Plant Cell">
        <title>The Arabidopsis SLEEPY1 gene encodes a putative F-box subunit of an SCF E3 ubiquitin ligase.</title>
        <authorList>
            <person name="McGinnis K.M."/>
            <person name="Thomas S.G."/>
            <person name="Soule J.D."/>
            <person name="Strader L.C."/>
            <person name="Zale J.M."/>
            <person name="Sun T.-P."/>
            <person name="Steber C.M."/>
        </authorList>
    </citation>
    <scope>FUNCTION</scope>
    <scope>TISSUE SPECIFICITY</scope>
</reference>
<reference key="6">
    <citation type="journal article" date="2004" name="Plant Cell">
        <title>The Arabidopsis F-box protein SLEEPY1 targets gibberellin signaling repressors for gibberellin-induced degradation.</title>
        <authorList>
            <person name="Dill A."/>
            <person name="Thomas S.G."/>
            <person name="Hu J."/>
            <person name="Steber C.M."/>
            <person name="Sun T.-P."/>
        </authorList>
    </citation>
    <scope>FUNCTION</scope>
    <scope>SUBCELLULAR LOCATION</scope>
    <scope>COMPONENT OF A SCF COMPLEX</scope>
    <scope>INTERACTION WITH GAI AND RGA</scope>
    <scope>MUTAGENESIS OF GLU-138</scope>
</reference>
<reference key="7">
    <citation type="journal article" date="2004" name="Plant Cell">
        <title>The Arabidopsis mutant sleepy1gar2-1 protein promotes plant growth by increasing the affinity of the SCFSLY1 E3 ubiquitin ligase for DELLA protein substrates.</title>
        <authorList>
            <person name="Fu X."/>
            <person name="Richards D.E."/>
            <person name="Fleck B."/>
            <person name="Xie D."/>
            <person name="Burton N."/>
            <person name="Harberd N.P."/>
        </authorList>
    </citation>
    <scope>FUNCTION</scope>
    <scope>SUBCELLULAR LOCATION</scope>
    <scope>COMPONENT OF A SCF COMPLEX WITH SKP1B AND CUL1</scope>
    <scope>INTERACTION WITH SKP1A; SKP1B; GAI AND RGA</scope>
    <scope>MUTAGENESIS OF GLU-138</scope>
</reference>
<reference key="8">
    <citation type="journal article" date="2004" name="Plant Physiol.">
        <title>Della proteins and gibberellin-regulated seed germination and floral development in Arabidopsis.</title>
        <authorList>
            <person name="Tyler L."/>
            <person name="Thomas S.G."/>
            <person name="Hu J."/>
            <person name="Dill A."/>
            <person name="Alonso J.M."/>
            <person name="Ecker J.R."/>
            <person name="Sun T.-P."/>
        </authorList>
    </citation>
    <scope>INTERACTION WITH GAI; RGA; RGL1 AND RGL3</scope>
</reference>
<reference key="9">
    <citation type="journal article" date="2004" name="Proc. Natl. Acad. Sci. U.S.A.">
        <title>Recessive-interfering mutations in the gibberellin signaling gene SLEEPY1 are rescued by overexpression of its homologue, SNEEZY.</title>
        <authorList>
            <person name="Strader L.C."/>
            <person name="Ritchie S."/>
            <person name="Soule J.D."/>
            <person name="McGinnis K.M."/>
            <person name="Steber C.M."/>
        </authorList>
    </citation>
    <scope>FUNCTION</scope>
</reference>
<organism>
    <name type="scientific">Arabidopsis thaliana</name>
    <name type="common">Mouse-ear cress</name>
    <dbReference type="NCBI Taxonomy" id="3702"/>
    <lineage>
        <taxon>Eukaryota</taxon>
        <taxon>Viridiplantae</taxon>
        <taxon>Streptophyta</taxon>
        <taxon>Embryophyta</taxon>
        <taxon>Tracheophyta</taxon>
        <taxon>Spermatophyta</taxon>
        <taxon>Magnoliopsida</taxon>
        <taxon>eudicotyledons</taxon>
        <taxon>Gunneridae</taxon>
        <taxon>Pentapetalae</taxon>
        <taxon>rosids</taxon>
        <taxon>malvids</taxon>
        <taxon>Brassicales</taxon>
        <taxon>Brassicaceae</taxon>
        <taxon>Camelineae</taxon>
        <taxon>Arabidopsis</taxon>
    </lineage>
</organism>
<comment type="function">
    <text evidence="2 3 4 6">Essential component of the SCF-type E3 ligase complex, SCF(GID2), a complex that positively regulates the gibberellin signaling pathway. Upon gibberellin treatment, the SCF(GID2) complex mediates the ubiquitination and subsequent degradation of DELLA proteins (GAI, RGA and RGL2), some repressors of the gibberellin pathway, leading to activate the pathway.</text>
</comment>
<comment type="pathway">
    <text>Protein modification; protein ubiquitination.</text>
</comment>
<comment type="subunit">
    <text evidence="3 4 5">Part of some SCF(GID2) complex, which consist of SKP1B, CUL1 cullin, GID2/SLY1 and some RING box protein. Interacts directly with SKP1A and SKP1B. Interacts directly with DELLA proteins GAI, RGA, RGL1, RGL3 and probably RGL2. May have a higher affinity for phosphorylated DELLA proteins.</text>
</comment>
<comment type="interaction">
    <interactant intactId="EBI-619033">
        <id>Q9STX3</id>
    </interactant>
    <interactant intactId="EBI-963606">
        <id>Q9LQT8</id>
        <label>GAI</label>
    </interactant>
    <organismsDiffer>false</organismsDiffer>
    <experiments>7</experiments>
</comment>
<comment type="interaction">
    <interactant intactId="EBI-619033">
        <id>Q9STX3</id>
    </interactant>
    <interactant intactId="EBI-963597">
        <id>Q9MAA7</id>
        <label>GID1A</label>
    </interactant>
    <organismsDiffer>false</organismsDiffer>
    <experiments>3</experiments>
</comment>
<comment type="interaction">
    <interactant intactId="EBI-619033">
        <id>Q9STX3</id>
    </interactant>
    <interactant intactId="EBI-963686">
        <id>Q9LYC1</id>
        <label>GID1B</label>
    </interactant>
    <organismsDiffer>false</organismsDiffer>
    <experiments>3</experiments>
</comment>
<comment type="interaction">
    <interactant intactId="EBI-619033">
        <id>Q9STX3</id>
    </interactant>
    <interactant intactId="EBI-963624">
        <id>Q9SLH3</id>
        <label>RGA</label>
    </interactant>
    <organismsDiffer>false</organismsDiffer>
    <experiments>4</experiments>
</comment>
<comment type="interaction">
    <interactant intactId="EBI-619033">
        <id>Q9STX3</id>
    </interactant>
    <interactant intactId="EBI-604076">
        <id>Q9FHW7</id>
        <label>SKP1B</label>
    </interactant>
    <organismsDiffer>false</organismsDiffer>
    <experiments>3</experiments>
</comment>
<comment type="subcellular location">
    <subcellularLocation>
        <location evidence="3 4">Nucleus</location>
    </subcellularLocation>
</comment>
<comment type="tissue specificity">
    <text evidence="2">Expressed in all tissues tested, including rosette leaves, green siliques, flowers, stems, cauline leaves and seedlings.</text>
</comment>
<protein>
    <recommendedName>
        <fullName>F-box protein GID2</fullName>
    </recommendedName>
    <alternativeName>
        <fullName>Protein SLEEPY 1</fullName>
    </alternativeName>
</protein>
<evidence type="ECO:0000256" key="1">
    <source>
        <dbReference type="SAM" id="MobiDB-lite"/>
    </source>
</evidence>
<evidence type="ECO:0000269" key="2">
    <source>
    </source>
</evidence>
<evidence type="ECO:0000269" key="3">
    <source>
    </source>
</evidence>
<evidence type="ECO:0000269" key="4">
    <source>
    </source>
</evidence>
<evidence type="ECO:0000269" key="5">
    <source>
    </source>
</evidence>
<evidence type="ECO:0000269" key="6">
    <source>
    </source>
</evidence>
<evidence type="ECO:0000305" key="7"/>
<gene>
    <name type="primary">GID2</name>
    <name type="synonym">SLY1</name>
    <name type="ordered locus">At4g24210</name>
    <name type="ORF">T22A6.40</name>
</gene>